<organism>
    <name type="scientific">Schizosaccharomyces pombe (strain 972 / ATCC 24843)</name>
    <name type="common">Fission yeast</name>
    <dbReference type="NCBI Taxonomy" id="284812"/>
    <lineage>
        <taxon>Eukaryota</taxon>
        <taxon>Fungi</taxon>
        <taxon>Dikarya</taxon>
        <taxon>Ascomycota</taxon>
        <taxon>Taphrinomycotina</taxon>
        <taxon>Schizosaccharomycetes</taxon>
        <taxon>Schizosaccharomycetales</taxon>
        <taxon>Schizosaccharomycetaceae</taxon>
        <taxon>Schizosaccharomyces</taxon>
    </lineage>
</organism>
<dbReference type="EMBL" id="CU329671">
    <property type="protein sequence ID" value="CAA18297.2"/>
    <property type="molecule type" value="Genomic_DNA"/>
</dbReference>
<dbReference type="PIR" id="T40332">
    <property type="entry name" value="T40332"/>
</dbReference>
<dbReference type="RefSeq" id="NP_596406.1">
    <property type="nucleotide sequence ID" value="NM_001022325.2"/>
</dbReference>
<dbReference type="SMR" id="O59716"/>
<dbReference type="BioGRID" id="277569">
    <property type="interactions" value="17"/>
</dbReference>
<dbReference type="FunCoup" id="O59716">
    <property type="interactions" value="1"/>
</dbReference>
<dbReference type="STRING" id="284812.O59716"/>
<dbReference type="iPTMnet" id="O59716"/>
<dbReference type="PaxDb" id="4896-SPBC3B8.08.1"/>
<dbReference type="EnsemblFungi" id="SPBC3B8.08.1">
    <property type="protein sequence ID" value="SPBC3B8.08.1:pep"/>
    <property type="gene ID" value="SPBC3B8.08"/>
</dbReference>
<dbReference type="KEGG" id="spo:2541054"/>
<dbReference type="PomBase" id="SPBC3B8.08"/>
<dbReference type="VEuPathDB" id="FungiDB:SPBC3B8.08"/>
<dbReference type="eggNOG" id="KOG4537">
    <property type="taxonomic scope" value="Eukaryota"/>
</dbReference>
<dbReference type="HOGENOM" id="CLU_1714363_0_0_1"/>
<dbReference type="InParanoid" id="O59716"/>
<dbReference type="OMA" id="KVPMMRL"/>
<dbReference type="PhylomeDB" id="O59716"/>
<dbReference type="PRO" id="PR:O59716"/>
<dbReference type="Proteomes" id="UP000002485">
    <property type="component" value="Chromosome II"/>
</dbReference>
<dbReference type="GO" id="GO:0005829">
    <property type="term" value="C:cytosol"/>
    <property type="evidence" value="ECO:0007005"/>
    <property type="project" value="PomBase"/>
</dbReference>
<dbReference type="GO" id="GO:0005634">
    <property type="term" value="C:nucleus"/>
    <property type="evidence" value="ECO:0007005"/>
    <property type="project" value="PomBase"/>
</dbReference>
<dbReference type="InterPro" id="IPR009563">
    <property type="entry name" value="SSSCA1"/>
</dbReference>
<dbReference type="InterPro" id="IPR051888">
    <property type="entry name" value="UPF0148_domain"/>
</dbReference>
<dbReference type="PANTHER" id="PTHR16537:SF1">
    <property type="entry name" value="PROTEIN ZNRD2"/>
    <property type="match status" value="1"/>
</dbReference>
<dbReference type="PANTHER" id="PTHR16537">
    <property type="entry name" value="SJOEGREN SYNDROME/SCLERODERMA AUTOANTIGEN 1"/>
    <property type="match status" value="1"/>
</dbReference>
<dbReference type="Pfam" id="PF06677">
    <property type="entry name" value="Auto_anti-p27"/>
    <property type="match status" value="1"/>
</dbReference>
<gene>
    <name type="ORF">SPBC3B8.08</name>
</gene>
<feature type="chain" id="PRO_0000372378" description="Uncharacterized protein C3B8.8">
    <location>
        <begin position="1"/>
        <end position="153"/>
    </location>
</feature>
<feature type="region of interest" description="Disordered" evidence="1">
    <location>
        <begin position="72"/>
        <end position="98"/>
    </location>
</feature>
<accession>O59716</accession>
<proteinExistence type="predicted"/>
<evidence type="ECO:0000256" key="1">
    <source>
        <dbReference type="SAM" id="MobiDB-lite"/>
    </source>
</evidence>
<evidence type="ECO:0000269" key="2">
    <source>
    </source>
</evidence>
<name>YBH8_SCHPO</name>
<protein>
    <recommendedName>
        <fullName>Uncharacterized protein C3B8.8</fullName>
    </recommendedName>
</protein>
<keyword id="KW-0963">Cytoplasm</keyword>
<keyword id="KW-0539">Nucleus</keyword>
<keyword id="KW-1185">Reference proteome</keyword>
<sequence length="153" mass="17186">MLTQDEVSAQLGQYMLRGYTLLDTICPKCEKVPMMRLRDNPMFCVSCINDLKESDASEHVTVAESAPKIASLPISKTNDAERSQQTTKAPVMERTESSHQATLSVYSRLISELESQLDDRLPLPHNTEFLDVSLQRIERILNLISLAKSLMSS</sequence>
<reference key="1">
    <citation type="journal article" date="2002" name="Nature">
        <title>The genome sequence of Schizosaccharomyces pombe.</title>
        <authorList>
            <person name="Wood V."/>
            <person name="Gwilliam R."/>
            <person name="Rajandream M.A."/>
            <person name="Lyne M.H."/>
            <person name="Lyne R."/>
            <person name="Stewart A."/>
            <person name="Sgouros J.G."/>
            <person name="Peat N."/>
            <person name="Hayles J."/>
            <person name="Baker S.G."/>
            <person name="Basham D."/>
            <person name="Bowman S."/>
            <person name="Brooks K."/>
            <person name="Brown D."/>
            <person name="Brown S."/>
            <person name="Chillingworth T."/>
            <person name="Churcher C.M."/>
            <person name="Collins M."/>
            <person name="Connor R."/>
            <person name="Cronin A."/>
            <person name="Davis P."/>
            <person name="Feltwell T."/>
            <person name="Fraser A."/>
            <person name="Gentles S."/>
            <person name="Goble A."/>
            <person name="Hamlin N."/>
            <person name="Harris D.E."/>
            <person name="Hidalgo J."/>
            <person name="Hodgson G."/>
            <person name="Holroyd S."/>
            <person name="Hornsby T."/>
            <person name="Howarth S."/>
            <person name="Huckle E.J."/>
            <person name="Hunt S."/>
            <person name="Jagels K."/>
            <person name="James K.D."/>
            <person name="Jones L."/>
            <person name="Jones M."/>
            <person name="Leather S."/>
            <person name="McDonald S."/>
            <person name="McLean J."/>
            <person name="Mooney P."/>
            <person name="Moule S."/>
            <person name="Mungall K.L."/>
            <person name="Murphy L.D."/>
            <person name="Niblett D."/>
            <person name="Odell C."/>
            <person name="Oliver K."/>
            <person name="O'Neil S."/>
            <person name="Pearson D."/>
            <person name="Quail M.A."/>
            <person name="Rabbinowitsch E."/>
            <person name="Rutherford K.M."/>
            <person name="Rutter S."/>
            <person name="Saunders D."/>
            <person name="Seeger K."/>
            <person name="Sharp S."/>
            <person name="Skelton J."/>
            <person name="Simmonds M.N."/>
            <person name="Squares R."/>
            <person name="Squares S."/>
            <person name="Stevens K."/>
            <person name="Taylor K."/>
            <person name="Taylor R.G."/>
            <person name="Tivey A."/>
            <person name="Walsh S.V."/>
            <person name="Warren T."/>
            <person name="Whitehead S."/>
            <person name="Woodward J.R."/>
            <person name="Volckaert G."/>
            <person name="Aert R."/>
            <person name="Robben J."/>
            <person name="Grymonprez B."/>
            <person name="Weltjens I."/>
            <person name="Vanstreels E."/>
            <person name="Rieger M."/>
            <person name="Schaefer M."/>
            <person name="Mueller-Auer S."/>
            <person name="Gabel C."/>
            <person name="Fuchs M."/>
            <person name="Duesterhoeft A."/>
            <person name="Fritzc C."/>
            <person name="Holzer E."/>
            <person name="Moestl D."/>
            <person name="Hilbert H."/>
            <person name="Borzym K."/>
            <person name="Langer I."/>
            <person name="Beck A."/>
            <person name="Lehrach H."/>
            <person name="Reinhardt R."/>
            <person name="Pohl T.M."/>
            <person name="Eger P."/>
            <person name="Zimmermann W."/>
            <person name="Wedler H."/>
            <person name="Wambutt R."/>
            <person name="Purnelle B."/>
            <person name="Goffeau A."/>
            <person name="Cadieu E."/>
            <person name="Dreano S."/>
            <person name="Gloux S."/>
            <person name="Lelaure V."/>
            <person name="Mottier S."/>
            <person name="Galibert F."/>
            <person name="Aves S.J."/>
            <person name="Xiang Z."/>
            <person name="Hunt C."/>
            <person name="Moore K."/>
            <person name="Hurst S.M."/>
            <person name="Lucas M."/>
            <person name="Rochet M."/>
            <person name="Gaillardin C."/>
            <person name="Tallada V.A."/>
            <person name="Garzon A."/>
            <person name="Thode G."/>
            <person name="Daga R.R."/>
            <person name="Cruzado L."/>
            <person name="Jimenez J."/>
            <person name="Sanchez M."/>
            <person name="del Rey F."/>
            <person name="Benito J."/>
            <person name="Dominguez A."/>
            <person name="Revuelta J.L."/>
            <person name="Moreno S."/>
            <person name="Armstrong J."/>
            <person name="Forsburg S.L."/>
            <person name="Cerutti L."/>
            <person name="Lowe T."/>
            <person name="McCombie W.R."/>
            <person name="Paulsen I."/>
            <person name="Potashkin J."/>
            <person name="Shpakovski G.V."/>
            <person name="Ussery D."/>
            <person name="Barrell B.G."/>
            <person name="Nurse P."/>
        </authorList>
    </citation>
    <scope>NUCLEOTIDE SEQUENCE [LARGE SCALE GENOMIC DNA]</scope>
    <source>
        <strain>972 / ATCC 24843</strain>
    </source>
</reference>
<reference key="2">
    <citation type="journal article" date="2006" name="Nat. Biotechnol.">
        <title>ORFeome cloning and global analysis of protein localization in the fission yeast Schizosaccharomyces pombe.</title>
        <authorList>
            <person name="Matsuyama A."/>
            <person name="Arai R."/>
            <person name="Yashiroda Y."/>
            <person name="Shirai A."/>
            <person name="Kamata A."/>
            <person name="Sekido S."/>
            <person name="Kobayashi Y."/>
            <person name="Hashimoto A."/>
            <person name="Hamamoto M."/>
            <person name="Hiraoka Y."/>
            <person name="Horinouchi S."/>
            <person name="Yoshida M."/>
        </authorList>
    </citation>
    <scope>SUBCELLULAR LOCATION [LARGE SCALE ANALYSIS]</scope>
</reference>
<comment type="subcellular location">
    <subcellularLocation>
        <location evidence="2">Cytoplasm</location>
    </subcellularLocation>
    <subcellularLocation>
        <location evidence="2">Nucleus</location>
    </subcellularLocation>
</comment>